<protein>
    <recommendedName>
        <fullName evidence="1">Small ribosomal subunit protein bS6</fullName>
    </recommendedName>
    <alternativeName>
        <fullName evidence="3">30S ribosomal protein S6</fullName>
    </alternativeName>
</protein>
<reference key="1">
    <citation type="journal article" date="2009" name="PLoS Genet.">
        <title>The complete genome and proteome of Laribacter hongkongensis reveal potential mechanisms for adaptations to different temperatures and habitats.</title>
        <authorList>
            <person name="Woo P.C.Y."/>
            <person name="Lau S.K.P."/>
            <person name="Tse H."/>
            <person name="Teng J.L.L."/>
            <person name="Curreem S.O."/>
            <person name="Tsang A.K.L."/>
            <person name="Fan R.Y.Y."/>
            <person name="Wong G.K.M."/>
            <person name="Huang Y."/>
            <person name="Loman N.J."/>
            <person name="Snyder L.A.S."/>
            <person name="Cai J.J."/>
            <person name="Huang J.-D."/>
            <person name="Mak W."/>
            <person name="Pallen M.J."/>
            <person name="Lok S."/>
            <person name="Yuen K.-Y."/>
        </authorList>
    </citation>
    <scope>NUCLEOTIDE SEQUENCE [LARGE SCALE GENOMIC DNA]</scope>
    <source>
        <strain>HLHK9</strain>
    </source>
</reference>
<accession>C1DCR4</accession>
<organism>
    <name type="scientific">Laribacter hongkongensis (strain HLHK9)</name>
    <dbReference type="NCBI Taxonomy" id="557598"/>
    <lineage>
        <taxon>Bacteria</taxon>
        <taxon>Pseudomonadati</taxon>
        <taxon>Pseudomonadota</taxon>
        <taxon>Betaproteobacteria</taxon>
        <taxon>Neisseriales</taxon>
        <taxon>Aquaspirillaceae</taxon>
        <taxon>Laribacter</taxon>
    </lineage>
</organism>
<feature type="chain" id="PRO_1000133532" description="Small ribosomal subunit protein bS6">
    <location>
        <begin position="1"/>
        <end position="125"/>
    </location>
</feature>
<feature type="region of interest" description="Disordered" evidence="2">
    <location>
        <begin position="101"/>
        <end position="125"/>
    </location>
</feature>
<comment type="function">
    <text evidence="1">Binds together with bS18 to 16S ribosomal RNA.</text>
</comment>
<comment type="similarity">
    <text evidence="1">Belongs to the bacterial ribosomal protein bS6 family.</text>
</comment>
<gene>
    <name evidence="1" type="primary">rpsF</name>
    <name type="ordered locus">LHK_02702</name>
</gene>
<sequence>MRHYEIVFIVHPDQSEQVPAMVERYKGMVLGQNGKIHRLEDWGRRQLAYPIQKIHKAHYVMMNIECGKETLEEIEHAFKFNDAVLRHLTIKMDRAVTEASPMMKEEKAKNLLAPQSDAAEPTAAA</sequence>
<evidence type="ECO:0000255" key="1">
    <source>
        <dbReference type="HAMAP-Rule" id="MF_00360"/>
    </source>
</evidence>
<evidence type="ECO:0000256" key="2">
    <source>
        <dbReference type="SAM" id="MobiDB-lite"/>
    </source>
</evidence>
<evidence type="ECO:0000305" key="3"/>
<keyword id="KW-1185">Reference proteome</keyword>
<keyword id="KW-0687">Ribonucleoprotein</keyword>
<keyword id="KW-0689">Ribosomal protein</keyword>
<keyword id="KW-0694">RNA-binding</keyword>
<keyword id="KW-0699">rRNA-binding</keyword>
<dbReference type="EMBL" id="CP001154">
    <property type="protein sequence ID" value="ACO75683.1"/>
    <property type="molecule type" value="Genomic_DNA"/>
</dbReference>
<dbReference type="RefSeq" id="WP_012698147.1">
    <property type="nucleotide sequence ID" value="NC_012559.1"/>
</dbReference>
<dbReference type="SMR" id="C1DCR4"/>
<dbReference type="STRING" id="557598.LHK_02702"/>
<dbReference type="GeneID" id="75110381"/>
<dbReference type="KEGG" id="lhk:LHK_02702"/>
<dbReference type="eggNOG" id="COG0360">
    <property type="taxonomic scope" value="Bacteria"/>
</dbReference>
<dbReference type="HOGENOM" id="CLU_113441_6_1_4"/>
<dbReference type="Proteomes" id="UP000002010">
    <property type="component" value="Chromosome"/>
</dbReference>
<dbReference type="GO" id="GO:0022627">
    <property type="term" value="C:cytosolic small ribosomal subunit"/>
    <property type="evidence" value="ECO:0007669"/>
    <property type="project" value="TreeGrafter"/>
</dbReference>
<dbReference type="GO" id="GO:0070181">
    <property type="term" value="F:small ribosomal subunit rRNA binding"/>
    <property type="evidence" value="ECO:0007669"/>
    <property type="project" value="TreeGrafter"/>
</dbReference>
<dbReference type="GO" id="GO:0003735">
    <property type="term" value="F:structural constituent of ribosome"/>
    <property type="evidence" value="ECO:0007669"/>
    <property type="project" value="InterPro"/>
</dbReference>
<dbReference type="GO" id="GO:0006412">
    <property type="term" value="P:translation"/>
    <property type="evidence" value="ECO:0007669"/>
    <property type="project" value="UniProtKB-UniRule"/>
</dbReference>
<dbReference type="CDD" id="cd00473">
    <property type="entry name" value="bS6"/>
    <property type="match status" value="1"/>
</dbReference>
<dbReference type="FunFam" id="3.30.70.60:FF:000003">
    <property type="entry name" value="30S ribosomal protein S6"/>
    <property type="match status" value="1"/>
</dbReference>
<dbReference type="Gene3D" id="3.30.70.60">
    <property type="match status" value="1"/>
</dbReference>
<dbReference type="HAMAP" id="MF_00360">
    <property type="entry name" value="Ribosomal_bS6"/>
    <property type="match status" value="1"/>
</dbReference>
<dbReference type="InterPro" id="IPR000529">
    <property type="entry name" value="Ribosomal_bS6"/>
</dbReference>
<dbReference type="InterPro" id="IPR035980">
    <property type="entry name" value="Ribosomal_bS6_sf"/>
</dbReference>
<dbReference type="InterPro" id="IPR020814">
    <property type="entry name" value="Ribosomal_S6_plastid/chlpt"/>
</dbReference>
<dbReference type="InterPro" id="IPR014717">
    <property type="entry name" value="Transl_elong_EF1B/ribsomal_bS6"/>
</dbReference>
<dbReference type="NCBIfam" id="TIGR00166">
    <property type="entry name" value="S6"/>
    <property type="match status" value="1"/>
</dbReference>
<dbReference type="PANTHER" id="PTHR21011">
    <property type="entry name" value="MITOCHONDRIAL 28S RIBOSOMAL PROTEIN S6"/>
    <property type="match status" value="1"/>
</dbReference>
<dbReference type="PANTHER" id="PTHR21011:SF1">
    <property type="entry name" value="SMALL RIBOSOMAL SUBUNIT PROTEIN BS6M"/>
    <property type="match status" value="1"/>
</dbReference>
<dbReference type="Pfam" id="PF01250">
    <property type="entry name" value="Ribosomal_S6"/>
    <property type="match status" value="1"/>
</dbReference>
<dbReference type="SUPFAM" id="SSF54995">
    <property type="entry name" value="Ribosomal protein S6"/>
    <property type="match status" value="1"/>
</dbReference>
<proteinExistence type="inferred from homology"/>
<name>RS6_LARHH</name>